<comment type="similarity">
    <text evidence="1">Belongs to the SlyX family.</text>
</comment>
<reference key="1">
    <citation type="submission" date="2006-03" db="EMBL/GenBank/DDBJ databases">
        <title>Complete sequence of chromosome of Nitrobacter hamburgensis X14.</title>
        <authorList>
            <consortium name="US DOE Joint Genome Institute"/>
            <person name="Copeland A."/>
            <person name="Lucas S."/>
            <person name="Lapidus A."/>
            <person name="Barry K."/>
            <person name="Detter J.C."/>
            <person name="Glavina del Rio T."/>
            <person name="Hammon N."/>
            <person name="Israni S."/>
            <person name="Dalin E."/>
            <person name="Tice H."/>
            <person name="Pitluck S."/>
            <person name="Chain P."/>
            <person name="Malfatti S."/>
            <person name="Shin M."/>
            <person name="Vergez L."/>
            <person name="Schmutz J."/>
            <person name="Larimer F."/>
            <person name="Land M."/>
            <person name="Hauser L."/>
            <person name="Kyrpides N."/>
            <person name="Ivanova N."/>
            <person name="Ward B."/>
            <person name="Arp D."/>
            <person name="Klotz M."/>
            <person name="Stein L."/>
            <person name="O'Mullan G."/>
            <person name="Starkenburg S."/>
            <person name="Sayavedra L."/>
            <person name="Poret-Peterson A.T."/>
            <person name="Gentry M.E."/>
            <person name="Bruce D."/>
            <person name="Richardson P."/>
        </authorList>
    </citation>
    <scope>NUCLEOTIDE SEQUENCE [LARGE SCALE GENOMIC DNA]</scope>
    <source>
        <strain>DSM 10229 / NCIMB 13809 / X14</strain>
    </source>
</reference>
<proteinExistence type="inferred from homology"/>
<keyword id="KW-1185">Reference proteome</keyword>
<protein>
    <recommendedName>
        <fullName evidence="1">Protein SlyX homolog</fullName>
    </recommendedName>
</protein>
<organism>
    <name type="scientific">Nitrobacter hamburgensis (strain DSM 10229 / NCIMB 13809 / X14)</name>
    <dbReference type="NCBI Taxonomy" id="323097"/>
    <lineage>
        <taxon>Bacteria</taxon>
        <taxon>Pseudomonadati</taxon>
        <taxon>Pseudomonadota</taxon>
        <taxon>Alphaproteobacteria</taxon>
        <taxon>Hyphomicrobiales</taxon>
        <taxon>Nitrobacteraceae</taxon>
        <taxon>Nitrobacter</taxon>
    </lineage>
</organism>
<accession>Q1QPC2</accession>
<dbReference type="EMBL" id="CP000319">
    <property type="protein sequence ID" value="ABE61925.1"/>
    <property type="molecule type" value="Genomic_DNA"/>
</dbReference>
<dbReference type="RefSeq" id="WP_011509621.1">
    <property type="nucleotide sequence ID" value="NC_007964.1"/>
</dbReference>
<dbReference type="SMR" id="Q1QPC2"/>
<dbReference type="STRING" id="323097.Nham_1077"/>
<dbReference type="KEGG" id="nha:Nham_1077"/>
<dbReference type="eggNOG" id="COG2900">
    <property type="taxonomic scope" value="Bacteria"/>
</dbReference>
<dbReference type="HOGENOM" id="CLU_180796_5_3_5"/>
<dbReference type="OrthoDB" id="5422806at2"/>
<dbReference type="Proteomes" id="UP000001953">
    <property type="component" value="Chromosome"/>
</dbReference>
<dbReference type="Gene3D" id="1.20.5.300">
    <property type="match status" value="1"/>
</dbReference>
<dbReference type="HAMAP" id="MF_00715">
    <property type="entry name" value="SlyX"/>
    <property type="match status" value="1"/>
</dbReference>
<dbReference type="InterPro" id="IPR007236">
    <property type="entry name" value="SlyX"/>
</dbReference>
<dbReference type="PANTHER" id="PTHR36508">
    <property type="entry name" value="PROTEIN SLYX"/>
    <property type="match status" value="1"/>
</dbReference>
<dbReference type="PANTHER" id="PTHR36508:SF1">
    <property type="entry name" value="PROTEIN SLYX"/>
    <property type="match status" value="1"/>
</dbReference>
<dbReference type="Pfam" id="PF04102">
    <property type="entry name" value="SlyX"/>
    <property type="match status" value="1"/>
</dbReference>
<evidence type="ECO:0000255" key="1">
    <source>
        <dbReference type="HAMAP-Rule" id="MF_00715"/>
    </source>
</evidence>
<evidence type="ECO:0000256" key="2">
    <source>
        <dbReference type="SAM" id="MobiDB-lite"/>
    </source>
</evidence>
<gene>
    <name evidence="1" type="primary">slyX</name>
    <name type="ordered locus">Nham_1077</name>
</gene>
<sequence>MTDKTFADRIDALEMRLTYQEETIETLNQAVTAQWKQIDALTRQVAELGERMREAEANRPGPTNEPPPHY</sequence>
<feature type="chain" id="PRO_1000045721" description="Protein SlyX homolog">
    <location>
        <begin position="1"/>
        <end position="70"/>
    </location>
</feature>
<feature type="region of interest" description="Disordered" evidence="2">
    <location>
        <begin position="51"/>
        <end position="70"/>
    </location>
</feature>
<name>SLYX_NITHX</name>